<accession>O34726</accession>
<accession>Q79ET4</accession>
<dbReference type="EMBL" id="D86417">
    <property type="protein sequence ID" value="BAA22312.1"/>
    <property type="molecule type" value="Genomic_DNA"/>
</dbReference>
<dbReference type="EMBL" id="AL009126">
    <property type="protein sequence ID" value="CAB12586.1"/>
    <property type="molecule type" value="Genomic_DNA"/>
</dbReference>
<dbReference type="PIR" id="F69811">
    <property type="entry name" value="F69811"/>
</dbReference>
<dbReference type="RefSeq" id="WP_003233725.1">
    <property type="nucleotide sequence ID" value="NZ_OZ025638.1"/>
</dbReference>
<dbReference type="SMR" id="O34726"/>
<dbReference type="FunCoup" id="O34726">
    <property type="interactions" value="133"/>
</dbReference>
<dbReference type="STRING" id="224308.BSU07570"/>
<dbReference type="PaxDb" id="224308-BSU07570"/>
<dbReference type="EnsemblBacteria" id="CAB12586">
    <property type="protein sequence ID" value="CAB12586"/>
    <property type="gene ID" value="BSU_07570"/>
</dbReference>
<dbReference type="GeneID" id="936122"/>
<dbReference type="KEGG" id="bsu:BSU07570"/>
<dbReference type="PATRIC" id="fig|224308.179.peg.822"/>
<dbReference type="eggNOG" id="COG0471">
    <property type="taxonomic scope" value="Bacteria"/>
</dbReference>
<dbReference type="InParanoid" id="O34726"/>
<dbReference type="OrthoDB" id="1401038at2"/>
<dbReference type="PhylomeDB" id="O34726"/>
<dbReference type="BioCyc" id="BSUB:BSU07570-MONOMER"/>
<dbReference type="Proteomes" id="UP000001570">
    <property type="component" value="Chromosome"/>
</dbReference>
<dbReference type="GO" id="GO:0005886">
    <property type="term" value="C:plasma membrane"/>
    <property type="evidence" value="ECO:0000318"/>
    <property type="project" value="GO_Central"/>
</dbReference>
<dbReference type="GO" id="GO:0022857">
    <property type="term" value="F:transmembrane transporter activity"/>
    <property type="evidence" value="ECO:0007669"/>
    <property type="project" value="InterPro"/>
</dbReference>
<dbReference type="InterPro" id="IPR030676">
    <property type="entry name" value="CitT-rel"/>
</dbReference>
<dbReference type="InterPro" id="IPR001898">
    <property type="entry name" value="SLC13A/DASS"/>
</dbReference>
<dbReference type="NCBIfam" id="TIGR00785">
    <property type="entry name" value="dass"/>
    <property type="match status" value="1"/>
</dbReference>
<dbReference type="PANTHER" id="PTHR42826">
    <property type="entry name" value="DICARBOXYLATE TRANSPORTER 2.1, CHLOROPLASTIC"/>
    <property type="match status" value="1"/>
</dbReference>
<dbReference type="Pfam" id="PF00939">
    <property type="entry name" value="Na_sulph_symp"/>
    <property type="match status" value="1"/>
</dbReference>
<dbReference type="PIRSF" id="PIRSF002457">
    <property type="entry name" value="DASS"/>
    <property type="match status" value="1"/>
</dbReference>
<protein>
    <recommendedName>
        <fullName evidence="3">Putative malate transporter YflS</fullName>
    </recommendedName>
</protein>
<gene>
    <name type="primary">yflS</name>
    <name type="ordered locus">BSU07570</name>
</gene>
<keyword id="KW-1003">Cell membrane</keyword>
<keyword id="KW-0472">Membrane</keyword>
<keyword id="KW-1185">Reference proteome</keyword>
<keyword id="KW-0812">Transmembrane</keyword>
<keyword id="KW-1133">Transmembrane helix</keyword>
<keyword id="KW-0813">Transport</keyword>
<proteinExistence type="evidence at transcript level"/>
<reference key="1">
    <citation type="journal article" date="1997" name="Gene">
        <title>Cloning and sequencing of a 35.7 kb in the 70 degree-73 degree region of the Bacillus subtilis genome reveal genes for a new two-component system, three spore germination proteins, an iron uptake system and a general stress response protein.</title>
        <authorList>
            <person name="Yamamoto H."/>
            <person name="Uchiyama S."/>
            <person name="Nugroho F.A."/>
            <person name="Sekiguchi J."/>
        </authorList>
    </citation>
    <scope>NUCLEOTIDE SEQUENCE [GENOMIC DNA]</scope>
    <source>
        <strain>168 / AC327</strain>
    </source>
</reference>
<reference key="2">
    <citation type="journal article" date="1997" name="Nature">
        <title>The complete genome sequence of the Gram-positive bacterium Bacillus subtilis.</title>
        <authorList>
            <person name="Kunst F."/>
            <person name="Ogasawara N."/>
            <person name="Moszer I."/>
            <person name="Albertini A.M."/>
            <person name="Alloni G."/>
            <person name="Azevedo V."/>
            <person name="Bertero M.G."/>
            <person name="Bessieres P."/>
            <person name="Bolotin A."/>
            <person name="Borchert S."/>
            <person name="Borriss R."/>
            <person name="Boursier L."/>
            <person name="Brans A."/>
            <person name="Braun M."/>
            <person name="Brignell S.C."/>
            <person name="Bron S."/>
            <person name="Brouillet S."/>
            <person name="Bruschi C.V."/>
            <person name="Caldwell B."/>
            <person name="Capuano V."/>
            <person name="Carter N.M."/>
            <person name="Choi S.-K."/>
            <person name="Codani J.-J."/>
            <person name="Connerton I.F."/>
            <person name="Cummings N.J."/>
            <person name="Daniel R.A."/>
            <person name="Denizot F."/>
            <person name="Devine K.M."/>
            <person name="Duesterhoeft A."/>
            <person name="Ehrlich S.D."/>
            <person name="Emmerson P.T."/>
            <person name="Entian K.-D."/>
            <person name="Errington J."/>
            <person name="Fabret C."/>
            <person name="Ferrari E."/>
            <person name="Foulger D."/>
            <person name="Fritz C."/>
            <person name="Fujita M."/>
            <person name="Fujita Y."/>
            <person name="Fuma S."/>
            <person name="Galizzi A."/>
            <person name="Galleron N."/>
            <person name="Ghim S.-Y."/>
            <person name="Glaser P."/>
            <person name="Goffeau A."/>
            <person name="Golightly E.J."/>
            <person name="Grandi G."/>
            <person name="Guiseppi G."/>
            <person name="Guy B.J."/>
            <person name="Haga K."/>
            <person name="Haiech J."/>
            <person name="Harwood C.R."/>
            <person name="Henaut A."/>
            <person name="Hilbert H."/>
            <person name="Holsappel S."/>
            <person name="Hosono S."/>
            <person name="Hullo M.-F."/>
            <person name="Itaya M."/>
            <person name="Jones L.-M."/>
            <person name="Joris B."/>
            <person name="Karamata D."/>
            <person name="Kasahara Y."/>
            <person name="Klaerr-Blanchard M."/>
            <person name="Klein C."/>
            <person name="Kobayashi Y."/>
            <person name="Koetter P."/>
            <person name="Koningstein G."/>
            <person name="Krogh S."/>
            <person name="Kumano M."/>
            <person name="Kurita K."/>
            <person name="Lapidus A."/>
            <person name="Lardinois S."/>
            <person name="Lauber J."/>
            <person name="Lazarevic V."/>
            <person name="Lee S.-M."/>
            <person name="Levine A."/>
            <person name="Liu H."/>
            <person name="Masuda S."/>
            <person name="Mauel C."/>
            <person name="Medigue C."/>
            <person name="Medina N."/>
            <person name="Mellado R.P."/>
            <person name="Mizuno M."/>
            <person name="Moestl D."/>
            <person name="Nakai S."/>
            <person name="Noback M."/>
            <person name="Noone D."/>
            <person name="O'Reilly M."/>
            <person name="Ogawa K."/>
            <person name="Ogiwara A."/>
            <person name="Oudega B."/>
            <person name="Park S.-H."/>
            <person name="Parro V."/>
            <person name="Pohl T.M."/>
            <person name="Portetelle D."/>
            <person name="Porwollik S."/>
            <person name="Prescott A.M."/>
            <person name="Presecan E."/>
            <person name="Pujic P."/>
            <person name="Purnelle B."/>
            <person name="Rapoport G."/>
            <person name="Rey M."/>
            <person name="Reynolds S."/>
            <person name="Rieger M."/>
            <person name="Rivolta C."/>
            <person name="Rocha E."/>
            <person name="Roche B."/>
            <person name="Rose M."/>
            <person name="Sadaie Y."/>
            <person name="Sato T."/>
            <person name="Scanlan E."/>
            <person name="Schleich S."/>
            <person name="Schroeter R."/>
            <person name="Scoffone F."/>
            <person name="Sekiguchi J."/>
            <person name="Sekowska A."/>
            <person name="Seror S.J."/>
            <person name="Serror P."/>
            <person name="Shin B.-S."/>
            <person name="Soldo B."/>
            <person name="Sorokin A."/>
            <person name="Tacconi E."/>
            <person name="Takagi T."/>
            <person name="Takahashi H."/>
            <person name="Takemaru K."/>
            <person name="Takeuchi M."/>
            <person name="Tamakoshi A."/>
            <person name="Tanaka T."/>
            <person name="Terpstra P."/>
            <person name="Tognoni A."/>
            <person name="Tosato V."/>
            <person name="Uchiyama S."/>
            <person name="Vandenbol M."/>
            <person name="Vannier F."/>
            <person name="Vassarotti A."/>
            <person name="Viari A."/>
            <person name="Wambutt R."/>
            <person name="Wedler E."/>
            <person name="Wedler H."/>
            <person name="Weitzenegger T."/>
            <person name="Winters P."/>
            <person name="Wipat A."/>
            <person name="Yamamoto H."/>
            <person name="Yamane K."/>
            <person name="Yasumoto K."/>
            <person name="Yata K."/>
            <person name="Yoshida K."/>
            <person name="Yoshikawa H.-F."/>
            <person name="Zumstein E."/>
            <person name="Yoshikawa H."/>
            <person name="Danchin A."/>
        </authorList>
    </citation>
    <scope>NUCLEOTIDE SEQUENCE [LARGE SCALE GENOMIC DNA]</scope>
    <source>
        <strain>168</strain>
    </source>
</reference>
<reference key="3">
    <citation type="journal article" date="2003" name="Microbiology">
        <title>The Bacillus subtilis YufLM two-component system regulates the expression of the malate transporters MaeN (YufR) and YflS, and is essential for utilization of malate in minimal medium.</title>
        <authorList>
            <person name="Tanaka K."/>
            <person name="Kobayashi K."/>
            <person name="Ogasawara N."/>
        </authorList>
    </citation>
    <scope>REGULATION BY MALK/MALR</scope>
</reference>
<evidence type="ECO:0000255" key="1"/>
<evidence type="ECO:0000269" key="2">
    <source>
    </source>
</evidence>
<evidence type="ECO:0000305" key="3"/>
<evidence type="ECO:0000305" key="4">
    <source>
    </source>
</evidence>
<comment type="function">
    <text evidence="4">Might be a malate transporter.</text>
</comment>
<comment type="subcellular location">
    <subcellularLocation>
        <location evidence="3">Cell membrane</location>
        <topology evidence="1">Multi-pass membrane protein</topology>
    </subcellularLocation>
</comment>
<comment type="induction">
    <text evidence="2">Expression is induced by the two-component regulatory system MalK/MalR in response to malate (PubMed:12949159). The regulator MalR binds to the promoter region of yflS (PubMed:12949159).</text>
</comment>
<comment type="similarity">
    <text evidence="3">Belongs to the SLC13A/DASS transporter (TC 2.A.47) family. DIT1 subfamily.</text>
</comment>
<feature type="chain" id="PRO_0000172502" description="Putative malate transporter YflS">
    <location>
        <begin position="1"/>
        <end position="478"/>
    </location>
</feature>
<feature type="transmembrane region" description="Helical" evidence="1">
    <location>
        <begin position="12"/>
        <end position="31"/>
    </location>
</feature>
<feature type="transmembrane region" description="Helical" evidence="1">
    <location>
        <begin position="41"/>
        <end position="57"/>
    </location>
</feature>
<feature type="transmembrane region" description="Helical" evidence="1">
    <location>
        <begin position="64"/>
        <end position="81"/>
    </location>
</feature>
<feature type="transmembrane region" description="Helical" evidence="1">
    <location>
        <begin position="96"/>
        <end position="118"/>
    </location>
</feature>
<feature type="transmembrane region" description="Helical" evidence="1">
    <location>
        <begin position="187"/>
        <end position="209"/>
    </location>
</feature>
<feature type="transmembrane region" description="Helical" evidence="1">
    <location>
        <begin position="222"/>
        <end position="244"/>
    </location>
</feature>
<feature type="transmembrane region" description="Helical" evidence="1">
    <location>
        <begin position="277"/>
        <end position="296"/>
    </location>
</feature>
<feature type="transmembrane region" description="Helical" evidence="1">
    <location>
        <begin position="300"/>
        <end position="319"/>
    </location>
</feature>
<feature type="transmembrane region" description="Helical" evidence="1">
    <location>
        <begin position="332"/>
        <end position="354"/>
    </location>
</feature>
<feature type="transmembrane region" description="Helical" evidence="1">
    <location>
        <begin position="364"/>
        <end position="386"/>
    </location>
</feature>
<feature type="transmembrane region" description="Helical" evidence="1">
    <location>
        <begin position="398"/>
        <end position="420"/>
    </location>
</feature>
<feature type="transmembrane region" description="Helical" evidence="1">
    <location>
        <begin position="450"/>
        <end position="472"/>
    </location>
</feature>
<organism>
    <name type="scientific">Bacillus subtilis (strain 168)</name>
    <dbReference type="NCBI Taxonomy" id="224308"/>
    <lineage>
        <taxon>Bacteria</taxon>
        <taxon>Bacillati</taxon>
        <taxon>Bacillota</taxon>
        <taxon>Bacilli</taxon>
        <taxon>Bacillales</taxon>
        <taxon>Bacillaceae</taxon>
        <taxon>Bacillus</taxon>
    </lineage>
</organism>
<sequence>MASEKDAGKQSAVKLVPLLITVAVGLIIWFIPAPSGLEPKAWHLFAIFVATIIGFISKPLPMGAIAIFALAVTALTGTLSIEDTLSGFGNKTIWLIVIAFFISRGFIKTGLGARISYVFVQKFGKKTLGLSYSLLFSDLILSPAIPSNTARAGGIIFPIIRSLSETFGSSPANGTERKIGAFLLKTGFQGNLITSAMFLTAMAANPLIAKLAHDVAGVDLTWTSWAIAAIVPGLVSLIITPLVIYKLYPPEIKETPDAAKIATEKLKEMGPFKKSELSMVIVFLLVLVLWIFGGSFNIDATTTALIGLAVLLLSQVLTWDDIKKEQGAWDTLTWFAALVMLANFLNELGMVSWFSNAMKSSVSGFSWIVAFIILIVVYYYSHYFFASATAHISAMYSAFLAVVVAAGAPPLLAALSLAFISNLFGSTTHYGSGAAPVFFGAGYIPQGKWWSIGFILSIVHIIVWLVIGGLWWKVLGIW</sequence>
<name>YFLS_BACSU</name>